<sequence>MVKVANKYAKALFDVSLDTNNLETINEELTVINEAVKDKIEQLKMVDSNPTQTAEQRRELINGVFTDINPYIKNMMYVLADNRHISLIADVFKAFQSLYNGHYNQDFATIESTYELSQEELDKIVKLVTQQTKLSKVIVDTKINPDLIGGFRVKVGTTVLDGSVRNDLVQLQRKFRRVN</sequence>
<protein>
    <recommendedName>
        <fullName evidence="1">ATP synthase subunit delta</fullName>
    </recommendedName>
    <alternativeName>
        <fullName evidence="1">ATP synthase F(1) sector subunit delta</fullName>
    </alternativeName>
    <alternativeName>
        <fullName evidence="1">F-type ATPase subunit delta</fullName>
        <shortName evidence="1">F-ATPase subunit delta</shortName>
    </alternativeName>
</protein>
<gene>
    <name evidence="1" type="primary">atpH</name>
    <name type="ordered locus">SaurJH9_2142</name>
</gene>
<name>ATPD_STAA9</name>
<dbReference type="EMBL" id="CP000703">
    <property type="protein sequence ID" value="ABQ49924.1"/>
    <property type="molecule type" value="Genomic_DNA"/>
</dbReference>
<dbReference type="RefSeq" id="WP_000241344.1">
    <property type="nucleotide sequence ID" value="NC_009487.1"/>
</dbReference>
<dbReference type="SMR" id="A5IUQ1"/>
<dbReference type="KEGG" id="saj:SaurJH9_2142"/>
<dbReference type="HOGENOM" id="CLU_085114_4_1_9"/>
<dbReference type="GO" id="GO:0005886">
    <property type="term" value="C:plasma membrane"/>
    <property type="evidence" value="ECO:0007669"/>
    <property type="project" value="UniProtKB-SubCell"/>
</dbReference>
<dbReference type="GO" id="GO:0045259">
    <property type="term" value="C:proton-transporting ATP synthase complex"/>
    <property type="evidence" value="ECO:0007669"/>
    <property type="project" value="UniProtKB-KW"/>
</dbReference>
<dbReference type="GO" id="GO:0046933">
    <property type="term" value="F:proton-transporting ATP synthase activity, rotational mechanism"/>
    <property type="evidence" value="ECO:0007669"/>
    <property type="project" value="UniProtKB-UniRule"/>
</dbReference>
<dbReference type="Gene3D" id="1.10.520.20">
    <property type="entry name" value="N-terminal domain of the delta subunit of the F1F0-ATP synthase"/>
    <property type="match status" value="1"/>
</dbReference>
<dbReference type="HAMAP" id="MF_01416">
    <property type="entry name" value="ATP_synth_delta_bact"/>
    <property type="match status" value="1"/>
</dbReference>
<dbReference type="InterPro" id="IPR026015">
    <property type="entry name" value="ATP_synth_OSCP/delta_N_sf"/>
</dbReference>
<dbReference type="InterPro" id="IPR020781">
    <property type="entry name" value="ATPase_OSCP/d_CS"/>
</dbReference>
<dbReference type="InterPro" id="IPR000711">
    <property type="entry name" value="ATPase_OSCP/dsu"/>
</dbReference>
<dbReference type="NCBIfam" id="TIGR01145">
    <property type="entry name" value="ATP_synt_delta"/>
    <property type="match status" value="1"/>
</dbReference>
<dbReference type="NCBIfam" id="NF004399">
    <property type="entry name" value="PRK05758.1-1"/>
    <property type="match status" value="1"/>
</dbReference>
<dbReference type="PANTHER" id="PTHR11910">
    <property type="entry name" value="ATP SYNTHASE DELTA CHAIN"/>
    <property type="match status" value="1"/>
</dbReference>
<dbReference type="Pfam" id="PF00213">
    <property type="entry name" value="OSCP"/>
    <property type="match status" value="1"/>
</dbReference>
<dbReference type="PRINTS" id="PR00125">
    <property type="entry name" value="ATPASEDELTA"/>
</dbReference>
<dbReference type="SUPFAM" id="SSF47928">
    <property type="entry name" value="N-terminal domain of the delta subunit of the F1F0-ATP synthase"/>
    <property type="match status" value="1"/>
</dbReference>
<dbReference type="PROSITE" id="PS00389">
    <property type="entry name" value="ATPASE_DELTA"/>
    <property type="match status" value="1"/>
</dbReference>
<organism>
    <name type="scientific">Staphylococcus aureus (strain JH9)</name>
    <dbReference type="NCBI Taxonomy" id="359786"/>
    <lineage>
        <taxon>Bacteria</taxon>
        <taxon>Bacillati</taxon>
        <taxon>Bacillota</taxon>
        <taxon>Bacilli</taxon>
        <taxon>Bacillales</taxon>
        <taxon>Staphylococcaceae</taxon>
        <taxon>Staphylococcus</taxon>
    </lineage>
</organism>
<comment type="function">
    <text evidence="1">F(1)F(0) ATP synthase produces ATP from ADP in the presence of a proton or sodium gradient. F-type ATPases consist of two structural domains, F(1) containing the extramembraneous catalytic core and F(0) containing the membrane proton channel, linked together by a central stalk and a peripheral stalk. During catalysis, ATP synthesis in the catalytic domain of F(1) is coupled via a rotary mechanism of the central stalk subunits to proton translocation.</text>
</comment>
<comment type="function">
    <text evidence="1">This protein is part of the stalk that links CF(0) to CF(1). It either transmits conformational changes from CF(0) to CF(1) or is implicated in proton conduction.</text>
</comment>
<comment type="subunit">
    <text evidence="1">F-type ATPases have 2 components, F(1) - the catalytic core - and F(0) - the membrane proton channel. F(1) has five subunits: alpha(3), beta(3), gamma(1), delta(1), epsilon(1). F(0) has three main subunits: a(1), b(2) and c(10-14). The alpha and beta chains form an alternating ring which encloses part of the gamma chain. F(1) is attached to F(0) by a central stalk formed by the gamma and epsilon chains, while a peripheral stalk is formed by the delta and b chains.</text>
</comment>
<comment type="subcellular location">
    <subcellularLocation>
        <location evidence="1">Cell membrane</location>
        <topology evidence="1">Peripheral membrane protein</topology>
    </subcellularLocation>
</comment>
<comment type="similarity">
    <text evidence="1">Belongs to the ATPase delta chain family.</text>
</comment>
<evidence type="ECO:0000255" key="1">
    <source>
        <dbReference type="HAMAP-Rule" id="MF_01416"/>
    </source>
</evidence>
<keyword id="KW-0066">ATP synthesis</keyword>
<keyword id="KW-1003">Cell membrane</keyword>
<keyword id="KW-0139">CF(1)</keyword>
<keyword id="KW-0375">Hydrogen ion transport</keyword>
<keyword id="KW-0406">Ion transport</keyword>
<keyword id="KW-0472">Membrane</keyword>
<keyword id="KW-0813">Transport</keyword>
<proteinExistence type="inferred from homology"/>
<accession>A5IUQ1</accession>
<reference key="1">
    <citation type="submission" date="2007-05" db="EMBL/GenBank/DDBJ databases">
        <title>Complete sequence of chromosome of Staphylococcus aureus subsp. aureus JH9.</title>
        <authorList>
            <consortium name="US DOE Joint Genome Institute"/>
            <person name="Copeland A."/>
            <person name="Lucas S."/>
            <person name="Lapidus A."/>
            <person name="Barry K."/>
            <person name="Detter J.C."/>
            <person name="Glavina del Rio T."/>
            <person name="Hammon N."/>
            <person name="Israni S."/>
            <person name="Pitluck S."/>
            <person name="Chain P."/>
            <person name="Malfatti S."/>
            <person name="Shin M."/>
            <person name="Vergez L."/>
            <person name="Schmutz J."/>
            <person name="Larimer F."/>
            <person name="Land M."/>
            <person name="Hauser L."/>
            <person name="Kyrpides N."/>
            <person name="Kim E."/>
            <person name="Tomasz A."/>
            <person name="Richardson P."/>
        </authorList>
    </citation>
    <scope>NUCLEOTIDE SEQUENCE [LARGE SCALE GENOMIC DNA]</scope>
    <source>
        <strain>JH9</strain>
    </source>
</reference>
<feature type="chain" id="PRO_1000184800" description="ATP synthase subunit delta">
    <location>
        <begin position="1"/>
        <end position="179"/>
    </location>
</feature>